<reference key="1">
    <citation type="submission" date="1995-10" db="EMBL/GenBank/DDBJ databases">
        <authorList>
            <person name="Delius H."/>
        </authorList>
    </citation>
    <scope>NUCLEOTIDE SEQUENCE [GENOMIC DNA]</scope>
</reference>
<gene>
    <name type="primary">E4</name>
</gene>
<evidence type="ECO:0000250" key="1">
    <source>
        <dbReference type="UniProtKB" id="P06922"/>
    </source>
</evidence>
<evidence type="ECO:0000256" key="2">
    <source>
        <dbReference type="SAM" id="MobiDB-lite"/>
    </source>
</evidence>
<evidence type="ECO:0000305" key="3"/>
<sequence length="91" mass="10130">MADNQVPKRHCQYPLLALLNTPDQPIPHHVPTTPQKQSRARRRLENELESTAQTSNHTAPQTPWAVTTTGTSVTITTRTKDGTQVVVTLHL</sequence>
<keyword id="KW-0244">Early protein</keyword>
<keyword id="KW-1035">Host cytoplasm</keyword>
<keyword id="KW-1079">Host G2/M cell cycle arrest by virus</keyword>
<keyword id="KW-1048">Host nucleus</keyword>
<keyword id="KW-0945">Host-virus interaction</keyword>
<keyword id="KW-1121">Modulation of host cell cycle by virus</keyword>
<keyword id="KW-0597">Phosphoprotein</keyword>
<keyword id="KW-1185">Reference proteome</keyword>
<feature type="chain" id="PRO_0000133277" description="Protein E4">
    <location>
        <begin position="1"/>
        <end position="91"/>
    </location>
</feature>
<feature type="region of interest" description="Disordered" evidence="2">
    <location>
        <begin position="20"/>
        <end position="64"/>
    </location>
</feature>
<feature type="compositionally biased region" description="Polar residues" evidence="2">
    <location>
        <begin position="49"/>
        <end position="61"/>
    </location>
</feature>
<proteinExistence type="inferred from homology"/>
<protein>
    <recommendedName>
        <fullName>Protein E4</fullName>
    </recommendedName>
</protein>
<accession>Q81022</accession>
<name>VE4_HPV54</name>
<organism>
    <name type="scientific">Human papillomavirus type 54</name>
    <dbReference type="NCBI Taxonomy" id="1671798"/>
    <lineage>
        <taxon>Viruses</taxon>
        <taxon>Monodnaviria</taxon>
        <taxon>Shotokuvirae</taxon>
        <taxon>Cossaviricota</taxon>
        <taxon>Papovaviricetes</taxon>
        <taxon>Zurhausenvirales</taxon>
        <taxon>Papillomaviridae</taxon>
        <taxon>Firstpapillomavirinae</taxon>
        <taxon>Alphapapillomavirus</taxon>
        <taxon>Alphapapillomavirus 13</taxon>
    </lineage>
</organism>
<comment type="function">
    <text evidence="1">Contributes to multiple aspects of the viral life cycle including viral genome amplification, suppression of suprabasal cell differentiation and egress of newly formed virions. Induces host cell cycle arrest at the G2 phase by associating with and preventing the nuclear entry of host CDK1/cyclin B1 complexes. Inhibits cellular DNA replication by preventing loading of host replication licensing proteins MCM2 and MCM7 onto chromatin. Within the cytoplasm, associates with host kinase SRPK1, a splicing factor regulator, and inhibits its activity. Therefore, E4 favors expression of late viral transcripts by inhibiting SRPK1-mediated phosphorylation of host serine-arginine (SR) proteins that have critical roles in mRNA metabolism. Late in the infectious cycle, E4 also acts to diminish the integrity of the keratinocyte by disrupting the keratin cytoskeleton and inducing apoptosis through alteration of mitochondrial function to facilitate egress of the newly formed virions.</text>
</comment>
<comment type="subunit">
    <text evidence="1">Assembles into oligomeric complexes. Interacts with host CDK1. Interacts with host SRPK1; this interaction may favor expression of late viral transcripts. Interacts with host cytokeratin components KRT8 and KRT18.</text>
</comment>
<comment type="subcellular location">
    <subcellularLocation>
        <location evidence="1">Host cytoplasm</location>
    </subcellularLocation>
    <subcellularLocation>
        <location evidence="1">Host nucleus</location>
    </subcellularLocation>
</comment>
<comment type="PTM">
    <text evidence="1">Phosphorylated by host ERK. The phosphorylation triggers a structural change that enhances keratin binding and protein stability.</text>
</comment>
<comment type="miscellaneous">
    <text evidence="1">The major E4 form is first synthesized as an E1^E4 fusion protein from spliced E1^E4 transcripts, such that the first few amino acids of the E4 protein are derived from the N terminus of E1.</text>
</comment>
<comment type="similarity">
    <text evidence="3">Belongs to the papillomaviridae E4 protein family.</text>
</comment>
<organismHost>
    <name type="scientific">Homo sapiens</name>
    <name type="common">Human</name>
    <dbReference type="NCBI Taxonomy" id="9606"/>
</organismHost>
<dbReference type="EMBL" id="U37488">
    <property type="protein sequence ID" value="AAA79191.1"/>
    <property type="status" value="ALT_SEQ"/>
    <property type="molecule type" value="Genomic_DNA"/>
</dbReference>
<dbReference type="RefSeq" id="NP_043292.1">
    <property type="nucleotide sequence ID" value="NC_001676.1"/>
</dbReference>
<dbReference type="GeneID" id="1497436"/>
<dbReference type="KEGG" id="vg:1497436"/>
<dbReference type="Proteomes" id="UP000007665">
    <property type="component" value="Segment"/>
</dbReference>
<dbReference type="GO" id="GO:0030430">
    <property type="term" value="C:host cell cytoplasm"/>
    <property type="evidence" value="ECO:0007669"/>
    <property type="project" value="UniProtKB-SubCell"/>
</dbReference>
<dbReference type="GO" id="GO:0042025">
    <property type="term" value="C:host cell nucleus"/>
    <property type="evidence" value="ECO:0007669"/>
    <property type="project" value="UniProtKB-SubCell"/>
</dbReference>
<dbReference type="GO" id="GO:0039592">
    <property type="term" value="P:symbiont-mediated arrest of host cell cycle during G2/M transition"/>
    <property type="evidence" value="ECO:0007669"/>
    <property type="project" value="UniProtKB-KW"/>
</dbReference>
<dbReference type="InterPro" id="IPR003861">
    <property type="entry name" value="Papilloma_E4"/>
</dbReference>
<dbReference type="Pfam" id="PF02711">
    <property type="entry name" value="Pap_E4"/>
    <property type="match status" value="1"/>
</dbReference>